<feature type="chain" id="PRO_0000151539" description="Arginine--tRNA ligase">
    <location>
        <begin position="1"/>
        <end position="574"/>
    </location>
</feature>
<feature type="short sequence motif" description="'HIGH' region">
    <location>
        <begin position="121"/>
        <end position="131"/>
    </location>
</feature>
<feature type="sequence conflict" description="In Ref. 2; AAA72384." evidence="2" ref="2">
    <original>E</original>
    <variation>K</variation>
    <location>
        <position position="9"/>
    </location>
</feature>
<sequence>MNLKNTIKEDIQDALIKIAIINCDPVITLNKKTKIGHYQLNNLIKIANISNLKPFELANRIILNIKKKYMYKEITFSQPGFINFLINPYWISEQLEKIFLSPRLGINHVNAQNIVIDYSSPNIAKEMHIGHLRSTIIGDVMARILDFLGHNVIRANHIGDWGTQFGMLIAYLEVKKLVNSPLSLMKLEEYYCKAKKKYDIDQLFAEKSREYVVKLQNGDQYCYSIWKKLVSITMLENCKIYKRLHVTLKKKHTMGESIYNKMLPNIIEDLKNKKIAIEKNGSTIVFLKEFKNRLGEPMGVVIQKKDKGFLYSTTDIACLKYRYQVLHADRIIYYTDSRQHQHLLQAWTIAKKALYISQNLLLEHHIFGMMLSKDKRPFKTRDGDTIKLSALLDEATERAMRLIKNKQPNLSKKKLNQLSNIIGVGAVKYADLSKNRNTNYIFDWNEMLSFEGNTAPYIQYAYTRIVSILKKSNMPIKKLKEKIFLTKESEINLAIKILEFEEIILLISQKGTPHILCKYLYHLATSFSHFYENCSILFPKKIKTCKSRLKLSILTAKTLKKGLNMLGIRVVKKM</sequence>
<dbReference type="EC" id="6.1.1.19"/>
<dbReference type="EMBL" id="BA000003">
    <property type="protein sequence ID" value="BAB12957.1"/>
    <property type="molecule type" value="Genomic_DNA"/>
</dbReference>
<dbReference type="EMBL" id="L18933">
    <property type="protein sequence ID" value="AAA72384.1"/>
    <property type="molecule type" value="Genomic_DNA"/>
</dbReference>
<dbReference type="RefSeq" id="NP_240071.1">
    <property type="nucleotide sequence ID" value="NC_002528.1"/>
</dbReference>
<dbReference type="RefSeq" id="WP_009874199.1">
    <property type="nucleotide sequence ID" value="NC_002528.1"/>
</dbReference>
<dbReference type="SMR" id="Q44683"/>
<dbReference type="STRING" id="563178.BUAP5A_238"/>
<dbReference type="EnsemblBacteria" id="BAB12957">
    <property type="protein sequence ID" value="BAB12957"/>
    <property type="gene ID" value="BAB12957"/>
</dbReference>
<dbReference type="KEGG" id="buc:BU242"/>
<dbReference type="PATRIC" id="fig|107806.10.peg.255"/>
<dbReference type="eggNOG" id="COG0018">
    <property type="taxonomic scope" value="Bacteria"/>
</dbReference>
<dbReference type="HOGENOM" id="CLU_006406_5_1_6"/>
<dbReference type="Proteomes" id="UP000001806">
    <property type="component" value="Chromosome"/>
</dbReference>
<dbReference type="GO" id="GO:0005737">
    <property type="term" value="C:cytoplasm"/>
    <property type="evidence" value="ECO:0007669"/>
    <property type="project" value="UniProtKB-SubCell"/>
</dbReference>
<dbReference type="GO" id="GO:0004814">
    <property type="term" value="F:arginine-tRNA ligase activity"/>
    <property type="evidence" value="ECO:0007669"/>
    <property type="project" value="UniProtKB-UniRule"/>
</dbReference>
<dbReference type="GO" id="GO:0005524">
    <property type="term" value="F:ATP binding"/>
    <property type="evidence" value="ECO:0007669"/>
    <property type="project" value="UniProtKB-UniRule"/>
</dbReference>
<dbReference type="GO" id="GO:0006420">
    <property type="term" value="P:arginyl-tRNA aminoacylation"/>
    <property type="evidence" value="ECO:0007669"/>
    <property type="project" value="UniProtKB-UniRule"/>
</dbReference>
<dbReference type="CDD" id="cd07956">
    <property type="entry name" value="Anticodon_Ia_Arg"/>
    <property type="match status" value="1"/>
</dbReference>
<dbReference type="CDD" id="cd00671">
    <property type="entry name" value="ArgRS_core"/>
    <property type="match status" value="1"/>
</dbReference>
<dbReference type="FunFam" id="3.40.50.620:FF:000030">
    <property type="entry name" value="Arginine--tRNA ligase"/>
    <property type="match status" value="1"/>
</dbReference>
<dbReference type="FunFam" id="1.10.730.10:FF:000006">
    <property type="entry name" value="Arginyl-tRNA synthetase 2, mitochondrial"/>
    <property type="match status" value="1"/>
</dbReference>
<dbReference type="Gene3D" id="3.30.1360.70">
    <property type="entry name" value="Arginyl tRNA synthetase N-terminal domain"/>
    <property type="match status" value="1"/>
</dbReference>
<dbReference type="Gene3D" id="3.40.50.620">
    <property type="entry name" value="HUPs"/>
    <property type="match status" value="1"/>
</dbReference>
<dbReference type="Gene3D" id="1.10.730.10">
    <property type="entry name" value="Isoleucyl-tRNA Synthetase, Domain 1"/>
    <property type="match status" value="1"/>
</dbReference>
<dbReference type="HAMAP" id="MF_00123">
    <property type="entry name" value="Arg_tRNA_synth"/>
    <property type="match status" value="1"/>
</dbReference>
<dbReference type="InterPro" id="IPR001412">
    <property type="entry name" value="aa-tRNA-synth_I_CS"/>
</dbReference>
<dbReference type="InterPro" id="IPR001278">
    <property type="entry name" value="Arg-tRNA-ligase"/>
</dbReference>
<dbReference type="InterPro" id="IPR005148">
    <property type="entry name" value="Arg-tRNA-synth_N"/>
</dbReference>
<dbReference type="InterPro" id="IPR036695">
    <property type="entry name" value="Arg-tRNA-synth_N_sf"/>
</dbReference>
<dbReference type="InterPro" id="IPR035684">
    <property type="entry name" value="ArgRS_core"/>
</dbReference>
<dbReference type="InterPro" id="IPR008909">
    <property type="entry name" value="DALR_anticod-bd"/>
</dbReference>
<dbReference type="InterPro" id="IPR014729">
    <property type="entry name" value="Rossmann-like_a/b/a_fold"/>
</dbReference>
<dbReference type="InterPro" id="IPR009080">
    <property type="entry name" value="tRNAsynth_Ia_anticodon-bd"/>
</dbReference>
<dbReference type="NCBIfam" id="TIGR00456">
    <property type="entry name" value="argS"/>
    <property type="match status" value="1"/>
</dbReference>
<dbReference type="PANTHER" id="PTHR11956:SF5">
    <property type="entry name" value="ARGININE--TRNA LIGASE, CYTOPLASMIC"/>
    <property type="match status" value="1"/>
</dbReference>
<dbReference type="PANTHER" id="PTHR11956">
    <property type="entry name" value="ARGINYL-TRNA SYNTHETASE"/>
    <property type="match status" value="1"/>
</dbReference>
<dbReference type="Pfam" id="PF03485">
    <property type="entry name" value="Arg_tRNA_synt_N"/>
    <property type="match status" value="1"/>
</dbReference>
<dbReference type="Pfam" id="PF05746">
    <property type="entry name" value="DALR_1"/>
    <property type="match status" value="1"/>
</dbReference>
<dbReference type="Pfam" id="PF00750">
    <property type="entry name" value="tRNA-synt_1d"/>
    <property type="match status" value="1"/>
</dbReference>
<dbReference type="PRINTS" id="PR01038">
    <property type="entry name" value="TRNASYNTHARG"/>
</dbReference>
<dbReference type="SMART" id="SM01016">
    <property type="entry name" value="Arg_tRNA_synt_N"/>
    <property type="match status" value="1"/>
</dbReference>
<dbReference type="SMART" id="SM00836">
    <property type="entry name" value="DALR_1"/>
    <property type="match status" value="1"/>
</dbReference>
<dbReference type="SUPFAM" id="SSF47323">
    <property type="entry name" value="Anticodon-binding domain of a subclass of class I aminoacyl-tRNA synthetases"/>
    <property type="match status" value="1"/>
</dbReference>
<dbReference type="SUPFAM" id="SSF55190">
    <property type="entry name" value="Arginyl-tRNA synthetase (ArgRS), N-terminal 'additional' domain"/>
    <property type="match status" value="1"/>
</dbReference>
<dbReference type="SUPFAM" id="SSF52374">
    <property type="entry name" value="Nucleotidylyl transferase"/>
    <property type="match status" value="1"/>
</dbReference>
<dbReference type="PROSITE" id="PS00178">
    <property type="entry name" value="AA_TRNA_LIGASE_I"/>
    <property type="match status" value="1"/>
</dbReference>
<accession>Q44683</accession>
<comment type="catalytic activity">
    <reaction>
        <text>tRNA(Arg) + L-arginine + ATP = L-arginyl-tRNA(Arg) + AMP + diphosphate</text>
        <dbReference type="Rhea" id="RHEA:20301"/>
        <dbReference type="Rhea" id="RHEA-COMP:9658"/>
        <dbReference type="Rhea" id="RHEA-COMP:9673"/>
        <dbReference type="ChEBI" id="CHEBI:30616"/>
        <dbReference type="ChEBI" id="CHEBI:32682"/>
        <dbReference type="ChEBI" id="CHEBI:33019"/>
        <dbReference type="ChEBI" id="CHEBI:78442"/>
        <dbReference type="ChEBI" id="CHEBI:78513"/>
        <dbReference type="ChEBI" id="CHEBI:456215"/>
        <dbReference type="EC" id="6.1.1.19"/>
    </reaction>
</comment>
<comment type="subunit">
    <text evidence="1">Monomer.</text>
</comment>
<comment type="subcellular location">
    <subcellularLocation>
        <location evidence="1">Cytoplasm</location>
    </subcellularLocation>
</comment>
<comment type="similarity">
    <text evidence="2">Belongs to the class-I aminoacyl-tRNA synthetase family.</text>
</comment>
<proteinExistence type="inferred from homology"/>
<keyword id="KW-0030">Aminoacyl-tRNA synthetase</keyword>
<keyword id="KW-0067">ATP-binding</keyword>
<keyword id="KW-0963">Cytoplasm</keyword>
<keyword id="KW-0436">Ligase</keyword>
<keyword id="KW-0547">Nucleotide-binding</keyword>
<keyword id="KW-0648">Protein biosynthesis</keyword>
<keyword id="KW-1185">Reference proteome</keyword>
<name>SYR_BUCAI</name>
<gene>
    <name type="primary">argS</name>
    <name type="ordered locus">BU242</name>
</gene>
<organism>
    <name type="scientific">Buchnera aphidicola subsp. Acyrthosiphon pisum (strain APS)</name>
    <name type="common">Acyrthosiphon pisum symbiotic bacterium</name>
    <dbReference type="NCBI Taxonomy" id="107806"/>
    <lineage>
        <taxon>Bacteria</taxon>
        <taxon>Pseudomonadati</taxon>
        <taxon>Pseudomonadota</taxon>
        <taxon>Gammaproteobacteria</taxon>
        <taxon>Enterobacterales</taxon>
        <taxon>Erwiniaceae</taxon>
        <taxon>Buchnera</taxon>
    </lineage>
</organism>
<protein>
    <recommendedName>
        <fullName>Arginine--tRNA ligase</fullName>
        <ecNumber>6.1.1.19</ecNumber>
    </recommendedName>
    <alternativeName>
        <fullName>Arginyl-tRNA synthetase</fullName>
        <shortName>ArgRS</shortName>
    </alternativeName>
</protein>
<reference key="1">
    <citation type="journal article" date="2000" name="Nature">
        <title>Genome sequence of the endocellular bacterial symbiont of aphids Buchnera sp. APS.</title>
        <authorList>
            <person name="Shigenobu S."/>
            <person name="Watanabe H."/>
            <person name="Hattori M."/>
            <person name="Sakaki Y."/>
            <person name="Ishikawa H."/>
        </authorList>
    </citation>
    <scope>NUCLEOTIDE SEQUENCE [LARGE SCALE GENOMIC DNA]</scope>
    <source>
        <strain>APS</strain>
    </source>
</reference>
<reference key="2">
    <citation type="book" date="1990" name="Aphid-plant genotype interactions">
        <title>Partial characterization of the ribosomal RNA operons of the pea aphid endosymbionts: evolution and physiological implications.</title>
        <editorList>
            <person name="Campbell R.K."/>
            <person name="Eikenbary R.D."/>
        </editorList>
        <authorList>
            <person name="Unterman B.M."/>
            <person name="Baumann P."/>
        </authorList>
    </citation>
    <scope>NUCLEOTIDE SEQUENCE [GENOMIC DNA] OF 1-158</scope>
</reference>
<evidence type="ECO:0000250" key="1"/>
<evidence type="ECO:0000305" key="2"/>